<feature type="chain" id="PRO_1000065425" description="Redox-sensing transcriptional repressor Rex">
    <location>
        <begin position="1"/>
        <end position="214"/>
    </location>
</feature>
<feature type="DNA-binding region" description="H-T-H motif" evidence="1">
    <location>
        <begin position="17"/>
        <end position="56"/>
    </location>
</feature>
<feature type="binding site" evidence="1">
    <location>
        <begin position="91"/>
        <end position="96"/>
    </location>
    <ligand>
        <name>NAD(+)</name>
        <dbReference type="ChEBI" id="CHEBI:57540"/>
    </ligand>
</feature>
<comment type="function">
    <text evidence="1">Modulates transcription in response to changes in cellular NADH/NAD(+) redox state.</text>
</comment>
<comment type="subunit">
    <text evidence="1">Homodimer.</text>
</comment>
<comment type="subcellular location">
    <subcellularLocation>
        <location evidence="1">Cytoplasm</location>
    </subcellularLocation>
</comment>
<comment type="similarity">
    <text evidence="1">Belongs to the transcriptional regulatory Rex family.</text>
</comment>
<dbReference type="EMBL" id="AM295007">
    <property type="protein sequence ID" value="CAM30273.1"/>
    <property type="molecule type" value="Genomic_DNA"/>
</dbReference>
<dbReference type="RefSeq" id="WP_002984705.1">
    <property type="nucleotide sequence ID" value="NC_009332.1"/>
</dbReference>
<dbReference type="SMR" id="A2REJ8"/>
<dbReference type="KEGG" id="spf:SpyM50946"/>
<dbReference type="HOGENOM" id="CLU_061534_1_1_9"/>
<dbReference type="GO" id="GO:0005737">
    <property type="term" value="C:cytoplasm"/>
    <property type="evidence" value="ECO:0007669"/>
    <property type="project" value="UniProtKB-SubCell"/>
</dbReference>
<dbReference type="GO" id="GO:0003677">
    <property type="term" value="F:DNA binding"/>
    <property type="evidence" value="ECO:0007669"/>
    <property type="project" value="UniProtKB-UniRule"/>
</dbReference>
<dbReference type="GO" id="GO:0003700">
    <property type="term" value="F:DNA-binding transcription factor activity"/>
    <property type="evidence" value="ECO:0007669"/>
    <property type="project" value="UniProtKB-UniRule"/>
</dbReference>
<dbReference type="GO" id="GO:0045892">
    <property type="term" value="P:negative regulation of DNA-templated transcription"/>
    <property type="evidence" value="ECO:0007669"/>
    <property type="project" value="InterPro"/>
</dbReference>
<dbReference type="GO" id="GO:0051775">
    <property type="term" value="P:response to redox state"/>
    <property type="evidence" value="ECO:0007669"/>
    <property type="project" value="InterPro"/>
</dbReference>
<dbReference type="Gene3D" id="3.40.50.720">
    <property type="entry name" value="NAD(P)-binding Rossmann-like Domain"/>
    <property type="match status" value="1"/>
</dbReference>
<dbReference type="Gene3D" id="1.10.10.10">
    <property type="entry name" value="Winged helix-like DNA-binding domain superfamily/Winged helix DNA-binding domain"/>
    <property type="match status" value="1"/>
</dbReference>
<dbReference type="HAMAP" id="MF_01131">
    <property type="entry name" value="Rex"/>
    <property type="match status" value="1"/>
</dbReference>
<dbReference type="InterPro" id="IPR003781">
    <property type="entry name" value="CoA-bd"/>
</dbReference>
<dbReference type="InterPro" id="IPR036291">
    <property type="entry name" value="NAD(P)-bd_dom_sf"/>
</dbReference>
<dbReference type="InterPro" id="IPR009718">
    <property type="entry name" value="Rex_DNA-bd_C_dom"/>
</dbReference>
<dbReference type="InterPro" id="IPR022876">
    <property type="entry name" value="Tscrpt_rep_Rex"/>
</dbReference>
<dbReference type="InterPro" id="IPR036388">
    <property type="entry name" value="WH-like_DNA-bd_sf"/>
</dbReference>
<dbReference type="InterPro" id="IPR036390">
    <property type="entry name" value="WH_DNA-bd_sf"/>
</dbReference>
<dbReference type="NCBIfam" id="NF003988">
    <property type="entry name" value="PRK05472.1-1"/>
    <property type="match status" value="1"/>
</dbReference>
<dbReference type="NCBIfam" id="NF003989">
    <property type="entry name" value="PRK05472.1-3"/>
    <property type="match status" value="1"/>
</dbReference>
<dbReference type="NCBIfam" id="NF003991">
    <property type="entry name" value="PRK05472.1-5"/>
    <property type="match status" value="1"/>
</dbReference>
<dbReference type="NCBIfam" id="NF003994">
    <property type="entry name" value="PRK05472.2-3"/>
    <property type="match status" value="1"/>
</dbReference>
<dbReference type="NCBIfam" id="NF003995">
    <property type="entry name" value="PRK05472.2-4"/>
    <property type="match status" value="1"/>
</dbReference>
<dbReference type="NCBIfam" id="NF003996">
    <property type="entry name" value="PRK05472.2-5"/>
    <property type="match status" value="1"/>
</dbReference>
<dbReference type="PANTHER" id="PTHR35786">
    <property type="entry name" value="REDOX-SENSING TRANSCRIPTIONAL REPRESSOR REX"/>
    <property type="match status" value="1"/>
</dbReference>
<dbReference type="PANTHER" id="PTHR35786:SF1">
    <property type="entry name" value="REDOX-SENSING TRANSCRIPTIONAL REPRESSOR REX 1"/>
    <property type="match status" value="1"/>
</dbReference>
<dbReference type="Pfam" id="PF02629">
    <property type="entry name" value="CoA_binding"/>
    <property type="match status" value="1"/>
</dbReference>
<dbReference type="Pfam" id="PF06971">
    <property type="entry name" value="Put_DNA-bind_N"/>
    <property type="match status" value="1"/>
</dbReference>
<dbReference type="SMART" id="SM00881">
    <property type="entry name" value="CoA_binding"/>
    <property type="match status" value="1"/>
</dbReference>
<dbReference type="SUPFAM" id="SSF51735">
    <property type="entry name" value="NAD(P)-binding Rossmann-fold domains"/>
    <property type="match status" value="1"/>
</dbReference>
<dbReference type="SUPFAM" id="SSF46785">
    <property type="entry name" value="Winged helix' DNA-binding domain"/>
    <property type="match status" value="1"/>
</dbReference>
<accession>A2REJ8</accession>
<reference key="1">
    <citation type="journal article" date="2007" name="J. Bacteriol.">
        <title>Complete genome of acute rheumatic fever-associated serotype M5 Streptococcus pyogenes strain Manfredo.</title>
        <authorList>
            <person name="Holden M.T.G."/>
            <person name="Scott A."/>
            <person name="Cherevach I."/>
            <person name="Chillingworth T."/>
            <person name="Churcher C."/>
            <person name="Cronin A."/>
            <person name="Dowd L."/>
            <person name="Feltwell T."/>
            <person name="Hamlin N."/>
            <person name="Holroyd S."/>
            <person name="Jagels K."/>
            <person name="Moule S."/>
            <person name="Mungall K."/>
            <person name="Quail M.A."/>
            <person name="Price C."/>
            <person name="Rabbinowitsch E."/>
            <person name="Sharp S."/>
            <person name="Skelton J."/>
            <person name="Whitehead S."/>
            <person name="Barrell B.G."/>
            <person name="Kehoe M."/>
            <person name="Parkhill J."/>
        </authorList>
    </citation>
    <scope>NUCLEOTIDE SEQUENCE [LARGE SCALE GENOMIC DNA]</scope>
    <source>
        <strain>Manfredo</strain>
    </source>
</reference>
<sequence>MVIDKSIPKATAKRLSLYYRIFKRFHADQVEKASSKQIADAMGIDSATVRRDFSYFGELGRRGFGYDVTKLMNFFADLLNDHSTTNVILVGCGNIGRALLHYRFHDRNKMQIAMGFDTDDNALVGTKTADNIPVHGISSVKERIANTDIETAILTVPSIHAQEVTDQLIEAGIKGILSFAPVHLQVPKGVIVQSVDLTSELQTLLYFMNQNHLD</sequence>
<keyword id="KW-0963">Cytoplasm</keyword>
<keyword id="KW-0238">DNA-binding</keyword>
<keyword id="KW-0520">NAD</keyword>
<keyword id="KW-0678">Repressor</keyword>
<keyword id="KW-0804">Transcription</keyword>
<keyword id="KW-0805">Transcription regulation</keyword>
<gene>
    <name evidence="1" type="primary">rex</name>
    <name type="ordered locus">SpyM50946</name>
</gene>
<proteinExistence type="inferred from homology"/>
<organism>
    <name type="scientific">Streptococcus pyogenes serotype M5 (strain Manfredo)</name>
    <dbReference type="NCBI Taxonomy" id="160491"/>
    <lineage>
        <taxon>Bacteria</taxon>
        <taxon>Bacillati</taxon>
        <taxon>Bacillota</taxon>
        <taxon>Bacilli</taxon>
        <taxon>Lactobacillales</taxon>
        <taxon>Streptococcaceae</taxon>
        <taxon>Streptococcus</taxon>
    </lineage>
</organism>
<evidence type="ECO:0000255" key="1">
    <source>
        <dbReference type="HAMAP-Rule" id="MF_01131"/>
    </source>
</evidence>
<name>REX_STRPG</name>
<protein>
    <recommendedName>
        <fullName evidence="1">Redox-sensing transcriptional repressor Rex</fullName>
    </recommendedName>
</protein>